<feature type="chain" id="PRO_1000095548" description="Histidine--tRNA ligase">
    <location>
        <begin position="1"/>
        <end position="420"/>
    </location>
</feature>
<name>SYH_DESAP</name>
<gene>
    <name evidence="1" type="primary">hisS</name>
    <name type="ordered locus">Daud_0905</name>
</gene>
<organism>
    <name type="scientific">Desulforudis audaxviator (strain MP104C)</name>
    <dbReference type="NCBI Taxonomy" id="477974"/>
    <lineage>
        <taxon>Bacteria</taxon>
        <taxon>Bacillati</taxon>
        <taxon>Bacillota</taxon>
        <taxon>Clostridia</taxon>
        <taxon>Thermoanaerobacterales</taxon>
        <taxon>Candidatus Desulforudaceae</taxon>
        <taxon>Candidatus Desulforudis</taxon>
    </lineage>
</organism>
<accession>B1I363</accession>
<evidence type="ECO:0000255" key="1">
    <source>
        <dbReference type="HAMAP-Rule" id="MF_00127"/>
    </source>
</evidence>
<protein>
    <recommendedName>
        <fullName evidence="1">Histidine--tRNA ligase</fullName>
        <ecNumber evidence="1">6.1.1.21</ecNumber>
    </recommendedName>
    <alternativeName>
        <fullName evidence="1">Histidyl-tRNA synthetase</fullName>
        <shortName evidence="1">HisRS</shortName>
    </alternativeName>
</protein>
<sequence length="420" mass="45970">MLISRPRGTSDLLPGDTARWQRVEAVIRDLCRVYGYGEIRTPLFEATELFQRGVGDITDIVEKEMYTFTDKGGRSLTLRPEGTAPVTRAYLENGLHAVPQPVKLFYVGPMFRYDRPQAGRYRQFHQFGVEIFGAADPAADAEVIALAMHFFDRLGLAGLELHLNSVGCPGCRAVLRRKLADYFEPRADELCANCRGRLRKNPLRLLDCKEERCREAGRGAPVPVDYLCPECGGHFGRVQRYLDLLGISFKLNPCLVRGLDYYTRTAFEILVPGGGAQDAVGGGGRYDGLVSAIGGPAVPGVGFALGLERTLLLWSRQAGEEVLPQGPVVFIATAGETEETATVLLSGLRAAGVPADREYTGRSLKAQMKFAAKLGARWVIIVGKDELEAGEVILRDMGAGLQTRVSLGEVVERLRRDARG</sequence>
<comment type="catalytic activity">
    <reaction evidence="1">
        <text>tRNA(His) + L-histidine + ATP = L-histidyl-tRNA(His) + AMP + diphosphate + H(+)</text>
        <dbReference type="Rhea" id="RHEA:17313"/>
        <dbReference type="Rhea" id="RHEA-COMP:9665"/>
        <dbReference type="Rhea" id="RHEA-COMP:9689"/>
        <dbReference type="ChEBI" id="CHEBI:15378"/>
        <dbReference type="ChEBI" id="CHEBI:30616"/>
        <dbReference type="ChEBI" id="CHEBI:33019"/>
        <dbReference type="ChEBI" id="CHEBI:57595"/>
        <dbReference type="ChEBI" id="CHEBI:78442"/>
        <dbReference type="ChEBI" id="CHEBI:78527"/>
        <dbReference type="ChEBI" id="CHEBI:456215"/>
        <dbReference type="EC" id="6.1.1.21"/>
    </reaction>
</comment>
<comment type="subunit">
    <text evidence="1">Homodimer.</text>
</comment>
<comment type="subcellular location">
    <subcellularLocation>
        <location evidence="1">Cytoplasm</location>
    </subcellularLocation>
</comment>
<comment type="similarity">
    <text evidence="1">Belongs to the class-II aminoacyl-tRNA synthetase family.</text>
</comment>
<proteinExistence type="inferred from homology"/>
<keyword id="KW-0030">Aminoacyl-tRNA synthetase</keyword>
<keyword id="KW-0067">ATP-binding</keyword>
<keyword id="KW-0963">Cytoplasm</keyword>
<keyword id="KW-0436">Ligase</keyword>
<keyword id="KW-0547">Nucleotide-binding</keyword>
<keyword id="KW-0648">Protein biosynthesis</keyword>
<keyword id="KW-1185">Reference proteome</keyword>
<dbReference type="EC" id="6.1.1.21" evidence="1"/>
<dbReference type="EMBL" id="CP000860">
    <property type="protein sequence ID" value="ACA59418.1"/>
    <property type="molecule type" value="Genomic_DNA"/>
</dbReference>
<dbReference type="RefSeq" id="WP_012302004.1">
    <property type="nucleotide sequence ID" value="NC_010424.1"/>
</dbReference>
<dbReference type="SMR" id="B1I363"/>
<dbReference type="STRING" id="477974.Daud_0905"/>
<dbReference type="KEGG" id="dau:Daud_0905"/>
<dbReference type="eggNOG" id="COG0124">
    <property type="taxonomic scope" value="Bacteria"/>
</dbReference>
<dbReference type="HOGENOM" id="CLU_025113_1_1_9"/>
<dbReference type="OrthoDB" id="9800814at2"/>
<dbReference type="Proteomes" id="UP000008544">
    <property type="component" value="Chromosome"/>
</dbReference>
<dbReference type="GO" id="GO:0005737">
    <property type="term" value="C:cytoplasm"/>
    <property type="evidence" value="ECO:0007669"/>
    <property type="project" value="UniProtKB-SubCell"/>
</dbReference>
<dbReference type="GO" id="GO:0005524">
    <property type="term" value="F:ATP binding"/>
    <property type="evidence" value="ECO:0007669"/>
    <property type="project" value="UniProtKB-UniRule"/>
</dbReference>
<dbReference type="GO" id="GO:0140096">
    <property type="term" value="F:catalytic activity, acting on a protein"/>
    <property type="evidence" value="ECO:0007669"/>
    <property type="project" value="UniProtKB-ARBA"/>
</dbReference>
<dbReference type="GO" id="GO:0004821">
    <property type="term" value="F:histidine-tRNA ligase activity"/>
    <property type="evidence" value="ECO:0007669"/>
    <property type="project" value="UniProtKB-UniRule"/>
</dbReference>
<dbReference type="GO" id="GO:0016740">
    <property type="term" value="F:transferase activity"/>
    <property type="evidence" value="ECO:0007669"/>
    <property type="project" value="UniProtKB-ARBA"/>
</dbReference>
<dbReference type="GO" id="GO:0006427">
    <property type="term" value="P:histidyl-tRNA aminoacylation"/>
    <property type="evidence" value="ECO:0007669"/>
    <property type="project" value="UniProtKB-UniRule"/>
</dbReference>
<dbReference type="CDD" id="cd00773">
    <property type="entry name" value="HisRS-like_core"/>
    <property type="match status" value="1"/>
</dbReference>
<dbReference type="CDD" id="cd00859">
    <property type="entry name" value="HisRS_anticodon"/>
    <property type="match status" value="1"/>
</dbReference>
<dbReference type="Gene3D" id="3.40.50.800">
    <property type="entry name" value="Anticodon-binding domain"/>
    <property type="match status" value="1"/>
</dbReference>
<dbReference type="Gene3D" id="3.30.930.10">
    <property type="entry name" value="Bira Bifunctional Protein, Domain 2"/>
    <property type="match status" value="1"/>
</dbReference>
<dbReference type="HAMAP" id="MF_00127">
    <property type="entry name" value="His_tRNA_synth"/>
    <property type="match status" value="1"/>
</dbReference>
<dbReference type="InterPro" id="IPR006195">
    <property type="entry name" value="aa-tRNA-synth_II"/>
</dbReference>
<dbReference type="InterPro" id="IPR045864">
    <property type="entry name" value="aa-tRNA-synth_II/BPL/LPL"/>
</dbReference>
<dbReference type="InterPro" id="IPR004154">
    <property type="entry name" value="Anticodon-bd"/>
</dbReference>
<dbReference type="InterPro" id="IPR036621">
    <property type="entry name" value="Anticodon-bd_dom_sf"/>
</dbReference>
<dbReference type="InterPro" id="IPR015807">
    <property type="entry name" value="His-tRNA-ligase"/>
</dbReference>
<dbReference type="InterPro" id="IPR041715">
    <property type="entry name" value="HisRS-like_core"/>
</dbReference>
<dbReference type="InterPro" id="IPR004516">
    <property type="entry name" value="HisRS/HisZ"/>
</dbReference>
<dbReference type="InterPro" id="IPR033656">
    <property type="entry name" value="HisRS_anticodon"/>
</dbReference>
<dbReference type="NCBIfam" id="TIGR00442">
    <property type="entry name" value="hisS"/>
    <property type="match status" value="1"/>
</dbReference>
<dbReference type="PANTHER" id="PTHR43707:SF1">
    <property type="entry name" value="HISTIDINE--TRNA LIGASE, MITOCHONDRIAL-RELATED"/>
    <property type="match status" value="1"/>
</dbReference>
<dbReference type="PANTHER" id="PTHR43707">
    <property type="entry name" value="HISTIDYL-TRNA SYNTHETASE"/>
    <property type="match status" value="1"/>
</dbReference>
<dbReference type="Pfam" id="PF03129">
    <property type="entry name" value="HGTP_anticodon"/>
    <property type="match status" value="1"/>
</dbReference>
<dbReference type="Pfam" id="PF13393">
    <property type="entry name" value="tRNA-synt_His"/>
    <property type="match status" value="1"/>
</dbReference>
<dbReference type="PIRSF" id="PIRSF001549">
    <property type="entry name" value="His-tRNA_synth"/>
    <property type="match status" value="1"/>
</dbReference>
<dbReference type="SUPFAM" id="SSF52954">
    <property type="entry name" value="Class II aaRS ABD-related"/>
    <property type="match status" value="1"/>
</dbReference>
<dbReference type="SUPFAM" id="SSF55681">
    <property type="entry name" value="Class II aaRS and biotin synthetases"/>
    <property type="match status" value="1"/>
</dbReference>
<dbReference type="PROSITE" id="PS50862">
    <property type="entry name" value="AA_TRNA_LIGASE_II"/>
    <property type="match status" value="1"/>
</dbReference>
<reference key="1">
    <citation type="submission" date="2007-10" db="EMBL/GenBank/DDBJ databases">
        <title>Complete sequence of chromosome of Desulforudis audaxviator MP104C.</title>
        <authorList>
            <person name="Copeland A."/>
            <person name="Lucas S."/>
            <person name="Lapidus A."/>
            <person name="Barry K."/>
            <person name="Glavina del Rio T."/>
            <person name="Dalin E."/>
            <person name="Tice H."/>
            <person name="Bruce D."/>
            <person name="Pitluck S."/>
            <person name="Lowry S.R."/>
            <person name="Larimer F."/>
            <person name="Land M.L."/>
            <person name="Hauser L."/>
            <person name="Kyrpides N."/>
            <person name="Ivanova N.N."/>
            <person name="Richardson P."/>
        </authorList>
    </citation>
    <scope>NUCLEOTIDE SEQUENCE [LARGE SCALE GENOMIC DNA]</scope>
    <source>
        <strain>MP104C</strain>
    </source>
</reference>